<sequence length="201" mass="22259">MVFIADYGAGNLRSVHKAFDYLGIEAVVSDKASEMSRYDKVLIPGVGAFGPAMEALNRQGFDEAIREHIDKGRSVLGICLGMQLFLSESEEMGAYKGLDIVPGKVLRFTSSTDKIPQIGWNSVDYCKDSVLFRNVPDQSYFYFVHSYYCAPDEPESVAATTFFAGKKFCSAIEKNGIFAVQFHPEKSSEAGLQVLKNFAEF</sequence>
<dbReference type="EC" id="4.3.2.10" evidence="1"/>
<dbReference type="EC" id="3.5.1.2" evidence="1"/>
<dbReference type="EMBL" id="AE006470">
    <property type="protein sequence ID" value="AAM71718.1"/>
    <property type="molecule type" value="Genomic_DNA"/>
</dbReference>
<dbReference type="RefSeq" id="NP_661376.1">
    <property type="nucleotide sequence ID" value="NC_002932.3"/>
</dbReference>
<dbReference type="RefSeq" id="WP_010932163.1">
    <property type="nucleotide sequence ID" value="NC_002932.3"/>
</dbReference>
<dbReference type="SMR" id="Q8KF56"/>
<dbReference type="STRING" id="194439.CT0476"/>
<dbReference type="EnsemblBacteria" id="AAM71718">
    <property type="protein sequence ID" value="AAM71718"/>
    <property type="gene ID" value="CT0476"/>
</dbReference>
<dbReference type="KEGG" id="cte:CT0476"/>
<dbReference type="PATRIC" id="fig|194439.7.peg.461"/>
<dbReference type="eggNOG" id="COG0118">
    <property type="taxonomic scope" value="Bacteria"/>
</dbReference>
<dbReference type="HOGENOM" id="CLU_071837_2_2_10"/>
<dbReference type="OrthoDB" id="9807137at2"/>
<dbReference type="UniPathway" id="UPA00031">
    <property type="reaction ID" value="UER00010"/>
</dbReference>
<dbReference type="Proteomes" id="UP000001007">
    <property type="component" value="Chromosome"/>
</dbReference>
<dbReference type="GO" id="GO:0005737">
    <property type="term" value="C:cytoplasm"/>
    <property type="evidence" value="ECO:0007669"/>
    <property type="project" value="UniProtKB-SubCell"/>
</dbReference>
<dbReference type="GO" id="GO:0004359">
    <property type="term" value="F:glutaminase activity"/>
    <property type="evidence" value="ECO:0007669"/>
    <property type="project" value="UniProtKB-EC"/>
</dbReference>
<dbReference type="GO" id="GO:0000107">
    <property type="term" value="F:imidazoleglycerol-phosphate synthase activity"/>
    <property type="evidence" value="ECO:0007669"/>
    <property type="project" value="UniProtKB-UniRule"/>
</dbReference>
<dbReference type="GO" id="GO:0016829">
    <property type="term" value="F:lyase activity"/>
    <property type="evidence" value="ECO:0007669"/>
    <property type="project" value="UniProtKB-KW"/>
</dbReference>
<dbReference type="GO" id="GO:0000105">
    <property type="term" value="P:L-histidine biosynthetic process"/>
    <property type="evidence" value="ECO:0007669"/>
    <property type="project" value="UniProtKB-UniRule"/>
</dbReference>
<dbReference type="CDD" id="cd01748">
    <property type="entry name" value="GATase1_IGP_Synthase"/>
    <property type="match status" value="1"/>
</dbReference>
<dbReference type="Gene3D" id="3.40.50.880">
    <property type="match status" value="1"/>
</dbReference>
<dbReference type="HAMAP" id="MF_00278">
    <property type="entry name" value="HisH"/>
    <property type="match status" value="1"/>
</dbReference>
<dbReference type="InterPro" id="IPR029062">
    <property type="entry name" value="Class_I_gatase-like"/>
</dbReference>
<dbReference type="InterPro" id="IPR017926">
    <property type="entry name" value="GATASE"/>
</dbReference>
<dbReference type="InterPro" id="IPR010139">
    <property type="entry name" value="Imidazole-glycPsynth_HisH"/>
</dbReference>
<dbReference type="NCBIfam" id="TIGR01855">
    <property type="entry name" value="IMP_synth_hisH"/>
    <property type="match status" value="1"/>
</dbReference>
<dbReference type="PANTHER" id="PTHR42701">
    <property type="entry name" value="IMIDAZOLE GLYCEROL PHOSPHATE SYNTHASE SUBUNIT HISH"/>
    <property type="match status" value="1"/>
</dbReference>
<dbReference type="PANTHER" id="PTHR42701:SF1">
    <property type="entry name" value="IMIDAZOLE GLYCEROL PHOSPHATE SYNTHASE SUBUNIT HISH"/>
    <property type="match status" value="1"/>
</dbReference>
<dbReference type="Pfam" id="PF00117">
    <property type="entry name" value="GATase"/>
    <property type="match status" value="1"/>
</dbReference>
<dbReference type="PIRSF" id="PIRSF000495">
    <property type="entry name" value="Amidotransf_hisH"/>
    <property type="match status" value="1"/>
</dbReference>
<dbReference type="SUPFAM" id="SSF52317">
    <property type="entry name" value="Class I glutamine amidotransferase-like"/>
    <property type="match status" value="1"/>
</dbReference>
<dbReference type="PROSITE" id="PS51273">
    <property type="entry name" value="GATASE_TYPE_1"/>
    <property type="match status" value="1"/>
</dbReference>
<protein>
    <recommendedName>
        <fullName evidence="1">Imidazole glycerol phosphate synthase subunit HisH</fullName>
        <ecNumber evidence="1">4.3.2.10</ecNumber>
    </recommendedName>
    <alternativeName>
        <fullName evidence="1">IGP synthase glutaminase subunit</fullName>
        <ecNumber evidence="1">3.5.1.2</ecNumber>
    </alternativeName>
    <alternativeName>
        <fullName evidence="1">IGP synthase subunit HisH</fullName>
    </alternativeName>
    <alternativeName>
        <fullName evidence="1">ImGP synthase subunit HisH</fullName>
        <shortName evidence="1">IGPS subunit HisH</shortName>
    </alternativeName>
</protein>
<evidence type="ECO:0000255" key="1">
    <source>
        <dbReference type="HAMAP-Rule" id="MF_00278"/>
    </source>
</evidence>
<reference key="1">
    <citation type="journal article" date="2002" name="Proc. Natl. Acad. Sci. U.S.A.">
        <title>The complete genome sequence of Chlorobium tepidum TLS, a photosynthetic, anaerobic, green-sulfur bacterium.</title>
        <authorList>
            <person name="Eisen J.A."/>
            <person name="Nelson K.E."/>
            <person name="Paulsen I.T."/>
            <person name="Heidelberg J.F."/>
            <person name="Wu M."/>
            <person name="Dodson R.J."/>
            <person name="DeBoy R.T."/>
            <person name="Gwinn M.L."/>
            <person name="Nelson W.C."/>
            <person name="Haft D.H."/>
            <person name="Hickey E.K."/>
            <person name="Peterson J.D."/>
            <person name="Durkin A.S."/>
            <person name="Kolonay J.F."/>
            <person name="Yang F."/>
            <person name="Holt I.E."/>
            <person name="Umayam L.A."/>
            <person name="Mason T.M."/>
            <person name="Brenner M."/>
            <person name="Shea T.P."/>
            <person name="Parksey D.S."/>
            <person name="Nierman W.C."/>
            <person name="Feldblyum T.V."/>
            <person name="Hansen C.L."/>
            <person name="Craven M.B."/>
            <person name="Radune D."/>
            <person name="Vamathevan J.J."/>
            <person name="Khouri H.M."/>
            <person name="White O."/>
            <person name="Gruber T.M."/>
            <person name="Ketchum K.A."/>
            <person name="Venter J.C."/>
            <person name="Tettelin H."/>
            <person name="Bryant D.A."/>
            <person name="Fraser C.M."/>
        </authorList>
    </citation>
    <scope>NUCLEOTIDE SEQUENCE [LARGE SCALE GENOMIC DNA]</scope>
    <source>
        <strain>ATCC 49652 / DSM 12025 / NBRC 103806 / TLS</strain>
    </source>
</reference>
<organism>
    <name type="scientific">Chlorobaculum tepidum (strain ATCC 49652 / DSM 12025 / NBRC 103806 / TLS)</name>
    <name type="common">Chlorobium tepidum</name>
    <dbReference type="NCBI Taxonomy" id="194439"/>
    <lineage>
        <taxon>Bacteria</taxon>
        <taxon>Pseudomonadati</taxon>
        <taxon>Chlorobiota</taxon>
        <taxon>Chlorobiia</taxon>
        <taxon>Chlorobiales</taxon>
        <taxon>Chlorobiaceae</taxon>
        <taxon>Chlorobaculum</taxon>
    </lineage>
</organism>
<gene>
    <name evidence="1" type="primary">hisH</name>
    <name type="ordered locus">CT0476</name>
</gene>
<proteinExistence type="inferred from homology"/>
<comment type="function">
    <text evidence="1">IGPS catalyzes the conversion of PRFAR and glutamine to IGP, AICAR and glutamate. The HisH subunit catalyzes the hydrolysis of glutamine to glutamate and ammonia as part of the synthesis of IGP and AICAR. The resulting ammonia molecule is channeled to the active site of HisF.</text>
</comment>
<comment type="catalytic activity">
    <reaction evidence="1">
        <text>5-[(5-phospho-1-deoxy-D-ribulos-1-ylimino)methylamino]-1-(5-phospho-beta-D-ribosyl)imidazole-4-carboxamide + L-glutamine = D-erythro-1-(imidazol-4-yl)glycerol 3-phosphate + 5-amino-1-(5-phospho-beta-D-ribosyl)imidazole-4-carboxamide + L-glutamate + H(+)</text>
        <dbReference type="Rhea" id="RHEA:24793"/>
        <dbReference type="ChEBI" id="CHEBI:15378"/>
        <dbReference type="ChEBI" id="CHEBI:29985"/>
        <dbReference type="ChEBI" id="CHEBI:58278"/>
        <dbReference type="ChEBI" id="CHEBI:58359"/>
        <dbReference type="ChEBI" id="CHEBI:58475"/>
        <dbReference type="ChEBI" id="CHEBI:58525"/>
        <dbReference type="EC" id="4.3.2.10"/>
    </reaction>
</comment>
<comment type="catalytic activity">
    <reaction evidence="1">
        <text>L-glutamine + H2O = L-glutamate + NH4(+)</text>
        <dbReference type="Rhea" id="RHEA:15889"/>
        <dbReference type="ChEBI" id="CHEBI:15377"/>
        <dbReference type="ChEBI" id="CHEBI:28938"/>
        <dbReference type="ChEBI" id="CHEBI:29985"/>
        <dbReference type="ChEBI" id="CHEBI:58359"/>
        <dbReference type="EC" id="3.5.1.2"/>
    </reaction>
</comment>
<comment type="pathway">
    <text evidence="1">Amino-acid biosynthesis; L-histidine biosynthesis; L-histidine from 5-phospho-alpha-D-ribose 1-diphosphate: step 5/9.</text>
</comment>
<comment type="subunit">
    <text evidence="1">Heterodimer of HisH and HisF.</text>
</comment>
<comment type="subcellular location">
    <subcellularLocation>
        <location evidence="1">Cytoplasm</location>
    </subcellularLocation>
</comment>
<name>HIS5_CHLTE</name>
<feature type="chain" id="PRO_0000152365" description="Imidazole glycerol phosphate synthase subunit HisH">
    <location>
        <begin position="1"/>
        <end position="201"/>
    </location>
</feature>
<feature type="domain" description="Glutamine amidotransferase type-1" evidence="1">
    <location>
        <begin position="1"/>
        <end position="201"/>
    </location>
</feature>
<feature type="active site" description="Nucleophile" evidence="1">
    <location>
        <position position="79"/>
    </location>
</feature>
<feature type="active site" evidence="1">
    <location>
        <position position="183"/>
    </location>
</feature>
<feature type="active site" evidence="1">
    <location>
        <position position="185"/>
    </location>
</feature>
<accession>Q8KF56</accession>
<keyword id="KW-0028">Amino-acid biosynthesis</keyword>
<keyword id="KW-0963">Cytoplasm</keyword>
<keyword id="KW-0315">Glutamine amidotransferase</keyword>
<keyword id="KW-0368">Histidine biosynthesis</keyword>
<keyword id="KW-0378">Hydrolase</keyword>
<keyword id="KW-0456">Lyase</keyword>
<keyword id="KW-1185">Reference proteome</keyword>